<sequence>MYKLVLIRHGESTWNLDNRFTGWTDVDLTPLGIEQAKNAGRLLKAEGYEFDVAYTSVLKRATRTLWHVLDEMDRTWLPVVNSWRLNERHYGALQGLNKAETAKQYGDAQVLAWRRSYDTPPPALEPTDPRSERADRRYARLSQDQVPLTECLKDTVARVMPFWYEALAPAIKAGKRVVVAAHGNSIRALVKYLDNISDDDIVGLNIPNGIPLVYELDENLKPIRHYYLGDAEAAAKAAAAVASQGKA</sequence>
<protein>
    <recommendedName>
        <fullName evidence="1">2,3-bisphosphoglycerate-dependent phosphoglycerate mutase</fullName>
        <shortName evidence="1">BPG-dependent PGAM</shortName>
        <shortName evidence="1">PGAM</shortName>
        <shortName evidence="1">Phosphoglyceromutase</shortName>
        <shortName evidence="1">dPGM</shortName>
        <ecNumber evidence="1">5.4.2.11</ecNumber>
    </recommendedName>
</protein>
<feature type="chain" id="PRO_1000064091" description="2,3-bisphosphoglycerate-dependent phosphoglycerate mutase">
    <location>
        <begin position="1"/>
        <end position="247"/>
    </location>
</feature>
<feature type="active site" description="Tele-phosphohistidine intermediate" evidence="1">
    <location>
        <position position="9"/>
    </location>
</feature>
<feature type="active site" description="Proton donor/acceptor" evidence="1">
    <location>
        <position position="87"/>
    </location>
</feature>
<feature type="binding site" evidence="1">
    <location>
        <begin position="8"/>
        <end position="15"/>
    </location>
    <ligand>
        <name>substrate</name>
    </ligand>
</feature>
<feature type="binding site" evidence="1">
    <location>
        <begin position="21"/>
        <end position="22"/>
    </location>
    <ligand>
        <name>substrate</name>
    </ligand>
</feature>
<feature type="binding site" evidence="1">
    <location>
        <position position="60"/>
    </location>
    <ligand>
        <name>substrate</name>
    </ligand>
</feature>
<feature type="binding site" evidence="1">
    <location>
        <begin position="87"/>
        <end position="90"/>
    </location>
    <ligand>
        <name>substrate</name>
    </ligand>
</feature>
<feature type="binding site" evidence="1">
    <location>
        <position position="98"/>
    </location>
    <ligand>
        <name>substrate</name>
    </ligand>
</feature>
<feature type="binding site" evidence="1">
    <location>
        <begin position="114"/>
        <end position="115"/>
    </location>
    <ligand>
        <name>substrate</name>
    </ligand>
</feature>
<feature type="binding site" evidence="1">
    <location>
        <begin position="183"/>
        <end position="184"/>
    </location>
    <ligand>
        <name>substrate</name>
    </ligand>
</feature>
<feature type="site" description="Transition state stabilizer" evidence="1">
    <location>
        <position position="182"/>
    </location>
</feature>
<name>GPMA_ALBFT</name>
<accession>Q21YW0</accession>
<reference key="1">
    <citation type="submission" date="2006-02" db="EMBL/GenBank/DDBJ databases">
        <title>Complete sequence of chromosome of Rhodoferax ferrireducens DSM 15236.</title>
        <authorList>
            <person name="Copeland A."/>
            <person name="Lucas S."/>
            <person name="Lapidus A."/>
            <person name="Barry K."/>
            <person name="Detter J.C."/>
            <person name="Glavina del Rio T."/>
            <person name="Hammon N."/>
            <person name="Israni S."/>
            <person name="Pitluck S."/>
            <person name="Brettin T."/>
            <person name="Bruce D."/>
            <person name="Han C."/>
            <person name="Tapia R."/>
            <person name="Gilna P."/>
            <person name="Kiss H."/>
            <person name="Schmutz J."/>
            <person name="Larimer F."/>
            <person name="Land M."/>
            <person name="Kyrpides N."/>
            <person name="Ivanova N."/>
            <person name="Richardson P."/>
        </authorList>
    </citation>
    <scope>NUCLEOTIDE SEQUENCE [LARGE SCALE GENOMIC DNA]</scope>
    <source>
        <strain>ATCC BAA-621 / DSM 15236 / T118</strain>
    </source>
</reference>
<keyword id="KW-0312">Gluconeogenesis</keyword>
<keyword id="KW-0324">Glycolysis</keyword>
<keyword id="KW-0413">Isomerase</keyword>
<keyword id="KW-1185">Reference proteome</keyword>
<evidence type="ECO:0000255" key="1">
    <source>
        <dbReference type="HAMAP-Rule" id="MF_01039"/>
    </source>
</evidence>
<comment type="function">
    <text evidence="1">Catalyzes the interconversion of 2-phosphoglycerate and 3-phosphoglycerate.</text>
</comment>
<comment type="catalytic activity">
    <reaction evidence="1">
        <text>(2R)-2-phosphoglycerate = (2R)-3-phosphoglycerate</text>
        <dbReference type="Rhea" id="RHEA:15901"/>
        <dbReference type="ChEBI" id="CHEBI:58272"/>
        <dbReference type="ChEBI" id="CHEBI:58289"/>
        <dbReference type="EC" id="5.4.2.11"/>
    </reaction>
</comment>
<comment type="pathway">
    <text evidence="1">Carbohydrate degradation; glycolysis; pyruvate from D-glyceraldehyde 3-phosphate: step 3/5.</text>
</comment>
<comment type="subunit">
    <text evidence="1">Homodimer.</text>
</comment>
<comment type="similarity">
    <text evidence="1">Belongs to the phosphoglycerate mutase family. BPG-dependent PGAM subfamily.</text>
</comment>
<dbReference type="EC" id="5.4.2.11" evidence="1"/>
<dbReference type="EMBL" id="CP000267">
    <property type="protein sequence ID" value="ABD69043.1"/>
    <property type="molecule type" value="Genomic_DNA"/>
</dbReference>
<dbReference type="RefSeq" id="WP_011463611.1">
    <property type="nucleotide sequence ID" value="NC_007908.1"/>
</dbReference>
<dbReference type="SMR" id="Q21YW0"/>
<dbReference type="STRING" id="338969.Rfer_1309"/>
<dbReference type="KEGG" id="rfr:Rfer_1309"/>
<dbReference type="eggNOG" id="COG0588">
    <property type="taxonomic scope" value="Bacteria"/>
</dbReference>
<dbReference type="HOGENOM" id="CLU_033323_1_1_4"/>
<dbReference type="OrthoDB" id="9781415at2"/>
<dbReference type="UniPathway" id="UPA00109">
    <property type="reaction ID" value="UER00186"/>
</dbReference>
<dbReference type="Proteomes" id="UP000008332">
    <property type="component" value="Chromosome"/>
</dbReference>
<dbReference type="GO" id="GO:0004619">
    <property type="term" value="F:phosphoglycerate mutase activity"/>
    <property type="evidence" value="ECO:0007669"/>
    <property type="project" value="UniProtKB-EC"/>
</dbReference>
<dbReference type="GO" id="GO:0006094">
    <property type="term" value="P:gluconeogenesis"/>
    <property type="evidence" value="ECO:0007669"/>
    <property type="project" value="UniProtKB-UniRule"/>
</dbReference>
<dbReference type="GO" id="GO:0006096">
    <property type="term" value="P:glycolytic process"/>
    <property type="evidence" value="ECO:0007669"/>
    <property type="project" value="UniProtKB-UniRule"/>
</dbReference>
<dbReference type="CDD" id="cd07067">
    <property type="entry name" value="HP_PGM_like"/>
    <property type="match status" value="1"/>
</dbReference>
<dbReference type="FunFam" id="3.40.50.1240:FF:000003">
    <property type="entry name" value="2,3-bisphosphoglycerate-dependent phosphoglycerate mutase"/>
    <property type="match status" value="1"/>
</dbReference>
<dbReference type="Gene3D" id="3.40.50.1240">
    <property type="entry name" value="Phosphoglycerate mutase-like"/>
    <property type="match status" value="1"/>
</dbReference>
<dbReference type="HAMAP" id="MF_01039">
    <property type="entry name" value="PGAM_GpmA"/>
    <property type="match status" value="1"/>
</dbReference>
<dbReference type="InterPro" id="IPR013078">
    <property type="entry name" value="His_Pase_superF_clade-1"/>
</dbReference>
<dbReference type="InterPro" id="IPR029033">
    <property type="entry name" value="His_PPase_superfam"/>
</dbReference>
<dbReference type="InterPro" id="IPR001345">
    <property type="entry name" value="PG/BPGM_mutase_AS"/>
</dbReference>
<dbReference type="InterPro" id="IPR005952">
    <property type="entry name" value="Phosphogly_mut1"/>
</dbReference>
<dbReference type="NCBIfam" id="TIGR01258">
    <property type="entry name" value="pgm_1"/>
    <property type="match status" value="1"/>
</dbReference>
<dbReference type="NCBIfam" id="NF010713">
    <property type="entry name" value="PRK14115.1"/>
    <property type="match status" value="1"/>
</dbReference>
<dbReference type="PANTHER" id="PTHR11931">
    <property type="entry name" value="PHOSPHOGLYCERATE MUTASE"/>
    <property type="match status" value="1"/>
</dbReference>
<dbReference type="Pfam" id="PF00300">
    <property type="entry name" value="His_Phos_1"/>
    <property type="match status" value="1"/>
</dbReference>
<dbReference type="PIRSF" id="PIRSF000709">
    <property type="entry name" value="6PFK_2-Ptase"/>
    <property type="match status" value="1"/>
</dbReference>
<dbReference type="SMART" id="SM00855">
    <property type="entry name" value="PGAM"/>
    <property type="match status" value="1"/>
</dbReference>
<dbReference type="SUPFAM" id="SSF53254">
    <property type="entry name" value="Phosphoglycerate mutase-like"/>
    <property type="match status" value="1"/>
</dbReference>
<dbReference type="PROSITE" id="PS00175">
    <property type="entry name" value="PG_MUTASE"/>
    <property type="match status" value="1"/>
</dbReference>
<organism>
    <name type="scientific">Albidiferax ferrireducens (strain ATCC BAA-621 / DSM 15236 / T118)</name>
    <name type="common">Rhodoferax ferrireducens</name>
    <dbReference type="NCBI Taxonomy" id="338969"/>
    <lineage>
        <taxon>Bacteria</taxon>
        <taxon>Pseudomonadati</taxon>
        <taxon>Pseudomonadota</taxon>
        <taxon>Betaproteobacteria</taxon>
        <taxon>Burkholderiales</taxon>
        <taxon>Comamonadaceae</taxon>
        <taxon>Rhodoferax</taxon>
    </lineage>
</organism>
<gene>
    <name evidence="1" type="primary">gpmA</name>
    <name type="ordered locus">Rfer_1309</name>
</gene>
<proteinExistence type="inferred from homology"/>